<reference key="1">
    <citation type="journal article" date="2002" name="Lancet">
        <title>Genome and virulence determinants of high virulence community-acquired MRSA.</title>
        <authorList>
            <person name="Baba T."/>
            <person name="Takeuchi F."/>
            <person name="Kuroda M."/>
            <person name="Yuzawa H."/>
            <person name="Aoki K."/>
            <person name="Oguchi A."/>
            <person name="Nagai Y."/>
            <person name="Iwama N."/>
            <person name="Asano K."/>
            <person name="Naimi T."/>
            <person name="Kuroda H."/>
            <person name="Cui L."/>
            <person name="Yamamoto K."/>
            <person name="Hiramatsu K."/>
        </authorList>
    </citation>
    <scope>NUCLEOTIDE SEQUENCE [LARGE SCALE GENOMIC DNA]</scope>
    <source>
        <strain>MW2</strain>
    </source>
</reference>
<sequence>MAQKPVDNITQIIGGTPVVKLRNVVDDNAADVYVKLEYQNPGGSVKDRIALAMIEKAEREGKIKPGDTIVEPTSGNTGIGLAFVCAAKGYKAVFTMPETMSQERRNLLKAYGAELVLTPGSEAMKGAIKKAKELKEEHGYFEPQQFENPANPEVHELTTGPELLQQFEGKTIDAFLAGVGTGGTLSGVGKVLKKEYPNIEIVAIEPEASPVLSGGEPGPHKLQGLGAGFIPGTLNTEIYDSIIKVGNDTAMEMSRRVAKEEGILAGISSGAAIYAAIQKAKELGKGKTVVTVLPSNGERYLSTPLYSFDD</sequence>
<dbReference type="EC" id="2.5.1.47"/>
<dbReference type="EMBL" id="BA000033">
    <property type="protein sequence ID" value="BAB94333.1"/>
    <property type="molecule type" value="Genomic_DNA"/>
</dbReference>
<dbReference type="RefSeq" id="WP_000057594.1">
    <property type="nucleotide sequence ID" value="NC_003923.1"/>
</dbReference>
<dbReference type="SMR" id="P63872"/>
<dbReference type="KEGG" id="sam:MW0468"/>
<dbReference type="HOGENOM" id="CLU_021018_1_0_9"/>
<dbReference type="UniPathway" id="UPA00136">
    <property type="reaction ID" value="UER00200"/>
</dbReference>
<dbReference type="GO" id="GO:0004124">
    <property type="term" value="F:cysteine synthase activity"/>
    <property type="evidence" value="ECO:0007669"/>
    <property type="project" value="UniProtKB-EC"/>
</dbReference>
<dbReference type="GO" id="GO:0006535">
    <property type="term" value="P:cysteine biosynthetic process from serine"/>
    <property type="evidence" value="ECO:0007669"/>
    <property type="project" value="InterPro"/>
</dbReference>
<dbReference type="CDD" id="cd01561">
    <property type="entry name" value="CBS_like"/>
    <property type="match status" value="1"/>
</dbReference>
<dbReference type="FunFam" id="3.40.50.1100:FF:000003">
    <property type="entry name" value="Cystathionine beta-synthase"/>
    <property type="match status" value="1"/>
</dbReference>
<dbReference type="FunFam" id="3.40.50.1100:FF:000118">
    <property type="entry name" value="Related to CYS4-cystathionine beta-synthase"/>
    <property type="match status" value="1"/>
</dbReference>
<dbReference type="Gene3D" id="3.40.50.1100">
    <property type="match status" value="2"/>
</dbReference>
<dbReference type="InterPro" id="IPR005856">
    <property type="entry name" value="Cys_synth"/>
</dbReference>
<dbReference type="InterPro" id="IPR050214">
    <property type="entry name" value="Cys_Synth/Cystath_Beta-Synth"/>
</dbReference>
<dbReference type="InterPro" id="IPR005859">
    <property type="entry name" value="CysK"/>
</dbReference>
<dbReference type="InterPro" id="IPR001216">
    <property type="entry name" value="P-phosphate_BS"/>
</dbReference>
<dbReference type="InterPro" id="IPR001926">
    <property type="entry name" value="TrpB-like_PALP"/>
</dbReference>
<dbReference type="InterPro" id="IPR036052">
    <property type="entry name" value="TrpB-like_PALP_sf"/>
</dbReference>
<dbReference type="NCBIfam" id="TIGR01139">
    <property type="entry name" value="cysK"/>
    <property type="match status" value="1"/>
</dbReference>
<dbReference type="NCBIfam" id="TIGR01136">
    <property type="entry name" value="cysKM"/>
    <property type="match status" value="1"/>
</dbReference>
<dbReference type="PANTHER" id="PTHR10314">
    <property type="entry name" value="CYSTATHIONINE BETA-SYNTHASE"/>
    <property type="match status" value="1"/>
</dbReference>
<dbReference type="Pfam" id="PF00291">
    <property type="entry name" value="PALP"/>
    <property type="match status" value="1"/>
</dbReference>
<dbReference type="SUPFAM" id="SSF53686">
    <property type="entry name" value="Tryptophan synthase beta subunit-like PLP-dependent enzymes"/>
    <property type="match status" value="1"/>
</dbReference>
<dbReference type="PROSITE" id="PS00901">
    <property type="entry name" value="CYS_SYNTHASE"/>
    <property type="match status" value="1"/>
</dbReference>
<proteinExistence type="inferred from homology"/>
<name>CYSK_STAAW</name>
<evidence type="ECO:0000250" key="1"/>
<evidence type="ECO:0000305" key="2"/>
<keyword id="KW-0028">Amino-acid biosynthesis</keyword>
<keyword id="KW-0198">Cysteine biosynthesis</keyword>
<keyword id="KW-0663">Pyridoxal phosphate</keyword>
<keyword id="KW-0808">Transferase</keyword>
<protein>
    <recommendedName>
        <fullName>Cysteine synthase</fullName>
        <shortName>CSase</shortName>
        <ecNumber>2.5.1.47</ecNumber>
    </recommendedName>
    <alternativeName>
        <fullName>O-acetylserine (thiol)-lyase</fullName>
        <shortName>OAS-TL</shortName>
    </alternativeName>
    <alternativeName>
        <fullName>O-acetylserine sulfhydrylase</fullName>
    </alternativeName>
</protein>
<accession>P63872</accession>
<accession>Q99W90</accession>
<comment type="catalytic activity">
    <reaction>
        <text>O-acetyl-L-serine + hydrogen sulfide = L-cysteine + acetate</text>
        <dbReference type="Rhea" id="RHEA:14829"/>
        <dbReference type="ChEBI" id="CHEBI:29919"/>
        <dbReference type="ChEBI" id="CHEBI:30089"/>
        <dbReference type="ChEBI" id="CHEBI:35235"/>
        <dbReference type="ChEBI" id="CHEBI:58340"/>
        <dbReference type="EC" id="2.5.1.47"/>
    </reaction>
</comment>
<comment type="cofactor">
    <cofactor evidence="1">
        <name>pyridoxal 5'-phosphate</name>
        <dbReference type="ChEBI" id="CHEBI:597326"/>
    </cofactor>
</comment>
<comment type="pathway">
    <text>Amino-acid biosynthesis; L-cysteine biosynthesis; L-cysteine from L-serine: step 2/2.</text>
</comment>
<comment type="subunit">
    <text evidence="1">Homodimer.</text>
</comment>
<comment type="similarity">
    <text evidence="2">Belongs to the cysteine synthase/cystathionine beta-synthase family.</text>
</comment>
<feature type="chain" id="PRO_0000167100" description="Cysteine synthase">
    <location>
        <begin position="1"/>
        <end position="310"/>
    </location>
</feature>
<feature type="binding site" evidence="1">
    <location>
        <position position="76"/>
    </location>
    <ligand>
        <name>pyridoxal 5'-phosphate</name>
        <dbReference type="ChEBI" id="CHEBI:597326"/>
    </ligand>
</feature>
<feature type="binding site" evidence="1">
    <location>
        <begin position="180"/>
        <end position="184"/>
    </location>
    <ligand>
        <name>pyridoxal 5'-phosphate</name>
        <dbReference type="ChEBI" id="CHEBI:597326"/>
    </ligand>
</feature>
<feature type="binding site" evidence="1">
    <location>
        <position position="268"/>
    </location>
    <ligand>
        <name>pyridoxal 5'-phosphate</name>
        <dbReference type="ChEBI" id="CHEBI:597326"/>
    </ligand>
</feature>
<feature type="modified residue" description="N6-(pyridoxal phosphate)lysine" evidence="1">
    <location>
        <position position="46"/>
    </location>
</feature>
<gene>
    <name type="primary">cysK</name>
    <name type="ordered locus">MW0468</name>
</gene>
<organism>
    <name type="scientific">Staphylococcus aureus (strain MW2)</name>
    <dbReference type="NCBI Taxonomy" id="196620"/>
    <lineage>
        <taxon>Bacteria</taxon>
        <taxon>Bacillati</taxon>
        <taxon>Bacillota</taxon>
        <taxon>Bacilli</taxon>
        <taxon>Bacillales</taxon>
        <taxon>Staphylococcaceae</taxon>
        <taxon>Staphylococcus</taxon>
    </lineage>
</organism>